<dbReference type="EMBL" id="AY204464">
    <property type="protein sequence ID" value="AAO22874.1"/>
    <property type="molecule type" value="Genomic_DNA"/>
</dbReference>
<dbReference type="EMBL" id="CP000113">
    <property type="protein sequence ID" value="ABF86116.1"/>
    <property type="molecule type" value="Genomic_DNA"/>
</dbReference>
<dbReference type="RefSeq" id="WP_011550766.1">
    <property type="nucleotide sequence ID" value="NC_008095.1"/>
</dbReference>
<dbReference type="SMR" id="Q1DEM0"/>
<dbReference type="STRING" id="246197.MXAN_0635"/>
<dbReference type="EnsemblBacteria" id="ABF86116">
    <property type="protein sequence ID" value="ABF86116"/>
    <property type="gene ID" value="MXAN_0635"/>
</dbReference>
<dbReference type="GeneID" id="41358113"/>
<dbReference type="KEGG" id="mxa:MXAN_0635"/>
<dbReference type="eggNOG" id="COG1192">
    <property type="taxonomic scope" value="Bacteria"/>
</dbReference>
<dbReference type="HOGENOM" id="CLU_037612_1_2_7"/>
<dbReference type="OrthoDB" id="9815116at2"/>
<dbReference type="Proteomes" id="UP000002402">
    <property type="component" value="Chromosome"/>
</dbReference>
<dbReference type="GO" id="GO:0005737">
    <property type="term" value="C:cytoplasm"/>
    <property type="evidence" value="ECO:0007669"/>
    <property type="project" value="UniProtKB-SubCell"/>
</dbReference>
<dbReference type="GO" id="GO:0005524">
    <property type="term" value="F:ATP binding"/>
    <property type="evidence" value="ECO:0007669"/>
    <property type="project" value="UniProtKB-KW"/>
</dbReference>
<dbReference type="GO" id="GO:0051301">
    <property type="term" value="P:cell division"/>
    <property type="evidence" value="ECO:0007669"/>
    <property type="project" value="UniProtKB-KW"/>
</dbReference>
<dbReference type="CDD" id="cd02042">
    <property type="entry name" value="ParAB_family"/>
    <property type="match status" value="1"/>
</dbReference>
<dbReference type="Gene3D" id="3.40.50.300">
    <property type="entry name" value="P-loop containing nucleotide triphosphate hydrolases"/>
    <property type="match status" value="1"/>
</dbReference>
<dbReference type="InterPro" id="IPR025669">
    <property type="entry name" value="AAA_dom"/>
</dbReference>
<dbReference type="InterPro" id="IPR050678">
    <property type="entry name" value="DNA_Partitioning_ATPase"/>
</dbReference>
<dbReference type="InterPro" id="IPR027417">
    <property type="entry name" value="P-loop_NTPase"/>
</dbReference>
<dbReference type="PANTHER" id="PTHR13696:SF99">
    <property type="entry name" value="COBYRINIC ACID AC-DIAMIDE SYNTHASE"/>
    <property type="match status" value="1"/>
</dbReference>
<dbReference type="PANTHER" id="PTHR13696">
    <property type="entry name" value="P-LOOP CONTAINING NUCLEOSIDE TRIPHOSPHATE HYDROLASE"/>
    <property type="match status" value="1"/>
</dbReference>
<dbReference type="Pfam" id="PF13614">
    <property type="entry name" value="AAA_31"/>
    <property type="match status" value="1"/>
</dbReference>
<dbReference type="SUPFAM" id="SSF52540">
    <property type="entry name" value="P-loop containing nucleoside triphosphate hydrolases"/>
    <property type="match status" value="1"/>
</dbReference>
<reference key="1">
    <citation type="journal article" date="2003" name="Mol. Microbiol.">
        <title>Identification of genes required for adventurous gliding motility in Myxococcus xanthus with the transposable element mariner.</title>
        <authorList>
            <person name="Youderian P.A."/>
            <person name="Burke N."/>
            <person name="White D.J."/>
            <person name="Hartzell P.L."/>
        </authorList>
    </citation>
    <scope>NUCLEOTIDE SEQUENCE [GENOMIC DNA]</scope>
    <scope>DISRUPTION PHENOTYPE</scope>
    <source>
        <strain>DK1622</strain>
    </source>
</reference>
<reference key="2">
    <citation type="journal article" date="2006" name="Proc. Natl. Acad. Sci. U.S.A.">
        <title>Evolution of sensory complexity recorded in a myxobacterial genome.</title>
        <authorList>
            <person name="Goldman B.S."/>
            <person name="Nierman W.C."/>
            <person name="Kaiser D."/>
            <person name="Slater S.C."/>
            <person name="Durkin A.S."/>
            <person name="Eisen J.A."/>
            <person name="Ronning C.M."/>
            <person name="Barbazuk W.B."/>
            <person name="Blanchard M."/>
            <person name="Field C."/>
            <person name="Halling C."/>
            <person name="Hinkle G."/>
            <person name="Iartchuk O."/>
            <person name="Kim H.S."/>
            <person name="Mackenzie C."/>
            <person name="Madupu R."/>
            <person name="Miller N."/>
            <person name="Shvartsbeyn A."/>
            <person name="Sullivan S.A."/>
            <person name="Vaudin M."/>
            <person name="Wiegand R."/>
            <person name="Kaplan H.B."/>
        </authorList>
    </citation>
    <scope>NUCLEOTIDE SEQUENCE [LARGE SCALE GENOMIC DNA]</scope>
    <source>
        <strain>DK1622</strain>
    </source>
</reference>
<reference key="3">
    <citation type="journal article" date="2013" name="Mol. Microbiol.">
        <title>PomZ, a ParA-like protein, regulates Z-ring formation and cell division in Myxococcus xanthus.</title>
        <authorList>
            <person name="Treuner-Lange A."/>
            <person name="Aguiluz K."/>
            <person name="van der Does C."/>
            <person name="Gomez-Santos N."/>
            <person name="Harms A."/>
            <person name="Schumacher D."/>
            <person name="Lenz P."/>
            <person name="Hoppert M."/>
            <person name="Kahnt J."/>
            <person name="Munoz-Dorado J."/>
            <person name="Soegaard-Andersen L."/>
        </authorList>
    </citation>
    <scope>FUNCTION</scope>
    <scope>POSSIBLE INTERACTION WITH FTSZ</scope>
    <scope>SUBCELLULAR LOCATION</scope>
    <scope>DISRUPTION PHENOTYPE</scope>
    <scope>MUTAGENESIS OF ASP-90</scope>
    <source>
        <strain>DK1622</strain>
    </source>
</reference>
<sequence>MEAPTYSSKQVAEMLGVSPKQIPEESRKDAYTPDDIWELRTTLDRFPARLGHRRQLFLNFKGGTGKTSLSTSYAWRLAELGYAVLLIDLDSQGHATKCLGYEGEDFEKTLLDVLVRKTPLAKVIQKSSLPNLDFVPSNLTMSTVDLALMPMAGREFKLRNALKDVEAQYDVVVFDAPPSFGLLNLNALMAANDLFVPVLADFLSFHGLKLLFETVQSLEEDLNHVLDHVFIVVNSFNATFKLAKEALEALQTHYPEFLLPTIIRQCTKFAQASSEGRPVFVADPSSKGANDIQAMIDNILPRLVAAAAVAQTKGTQQAG</sequence>
<gene>
    <name evidence="5" type="primary">pomZ</name>
    <name evidence="4" type="synonym">agmE</name>
    <name evidence="7" type="ordered locus">MXAN_0635</name>
</gene>
<name>POMZ_MYXXD</name>
<protein>
    <recommendedName>
        <fullName evidence="6">Cell division protein PomZ</fullName>
    </recommendedName>
    <alternativeName>
        <fullName evidence="4">Adventurous gliding motility protein E</fullName>
    </alternativeName>
    <alternativeName>
        <fullName evidence="5">Positioning at midcell of FtsZ</fullName>
    </alternativeName>
</protein>
<accession>Q1DEM0</accession>
<accession>Q84FD9</accession>
<keyword id="KW-0067">ATP-binding</keyword>
<keyword id="KW-0131">Cell cycle</keyword>
<keyword id="KW-0132">Cell division</keyword>
<keyword id="KW-0963">Cytoplasm</keyword>
<keyword id="KW-0547">Nucleotide-binding</keyword>
<keyword id="KW-1185">Reference proteome</keyword>
<evidence type="ECO:0000250" key="1">
    <source>
        <dbReference type="UniProtKB" id="Q72H90"/>
    </source>
</evidence>
<evidence type="ECO:0000269" key="2">
    <source>
    </source>
</evidence>
<evidence type="ECO:0000269" key="3">
    <source>
    </source>
</evidence>
<evidence type="ECO:0000303" key="4">
    <source>
    </source>
</evidence>
<evidence type="ECO:0000303" key="5">
    <source>
    </source>
</evidence>
<evidence type="ECO:0000305" key="6"/>
<evidence type="ECO:0000312" key="7">
    <source>
        <dbReference type="EMBL" id="ABF86116.1"/>
    </source>
</evidence>
<comment type="function">
    <text evidence="3">Spatial regulator of cell division that is involved in identifying the incipient division site, recruiting FtsZ to the division site and stabilizing the Z-ring. Binds ATP and GTP.</text>
</comment>
<comment type="subunit">
    <text evidence="3">Interacts with FtsZ in pull-down experiments.</text>
</comment>
<comment type="subcellular location">
    <subcellularLocation>
        <location evidence="6">Cytoplasm</location>
    </subcellularLocation>
    <text evidence="3">Localization is dynamic and cell cycle regulated. Accumulates at the division site at mid-cell after chromosome segregation but prior to FtsZ as well as in the absence of FtsZ.</text>
</comment>
<comment type="disruption phenotype">
    <text evidence="2 3">Deletion results in division defects with the formation of filamentous cells and chromosome-free minicells. It causes reduced formation of Z-rings and incorrect positioning of the few Z-rings formed. Deletion does not affect chromosome replication and segregation (PubMed:23145985). Inactivation affects adventurous (A) gliding motility (PubMed:12828649).</text>
</comment>
<comment type="similarity">
    <text evidence="6">Belongs to the ParA family.</text>
</comment>
<proteinExistence type="evidence at protein level"/>
<feature type="chain" id="PRO_0000436617" description="Cell division protein PomZ">
    <location>
        <begin position="1"/>
        <end position="319"/>
    </location>
</feature>
<feature type="binding site" evidence="1">
    <location>
        <begin position="61"/>
        <end position="68"/>
    </location>
    <ligand>
        <name>ATP</name>
        <dbReference type="ChEBI" id="CHEBI:30616"/>
    </ligand>
</feature>
<feature type="mutagenesis site" description="Lack of activity. Cannot complement the deletion mutant." evidence="3">
    <original>D</original>
    <variation>A</variation>
    <location>
        <position position="90"/>
    </location>
</feature>
<organism>
    <name type="scientific">Myxococcus xanthus (strain DK1622)</name>
    <dbReference type="NCBI Taxonomy" id="246197"/>
    <lineage>
        <taxon>Bacteria</taxon>
        <taxon>Pseudomonadati</taxon>
        <taxon>Myxococcota</taxon>
        <taxon>Myxococcia</taxon>
        <taxon>Myxococcales</taxon>
        <taxon>Cystobacterineae</taxon>
        <taxon>Myxococcaceae</taxon>
        <taxon>Myxococcus</taxon>
    </lineage>
</organism>